<proteinExistence type="inferred from homology"/>
<sequence length="138" mass="14676">MQVSIPVCYPCPSFPQTRPFAGDGRKFGRVDSGFMPKLWEGLSVGAGAAVGACARLALTMQFGEGLWPILAINMLGSFLMGRYRPGPFWGTGVLGGFTTFSAFAVVLVDVPLPHAVAYLTVTVVSCVAAWLMGNRWSA</sequence>
<keyword id="KW-1003">Cell membrane</keyword>
<keyword id="KW-0407">Ion channel</keyword>
<keyword id="KW-0406">Ion transport</keyword>
<keyword id="KW-0472">Membrane</keyword>
<keyword id="KW-0479">Metal-binding</keyword>
<keyword id="KW-1185">Reference proteome</keyword>
<keyword id="KW-0915">Sodium</keyword>
<keyword id="KW-0812">Transmembrane</keyword>
<keyword id="KW-1133">Transmembrane helix</keyword>
<keyword id="KW-0813">Transport</keyword>
<organism>
    <name type="scientific">Corynebacterium efficiens (strain DSM 44549 / YS-314 / AJ 12310 / JCM 11189 / NBRC 100395)</name>
    <dbReference type="NCBI Taxonomy" id="196164"/>
    <lineage>
        <taxon>Bacteria</taxon>
        <taxon>Bacillati</taxon>
        <taxon>Actinomycetota</taxon>
        <taxon>Actinomycetes</taxon>
        <taxon>Mycobacteriales</taxon>
        <taxon>Corynebacteriaceae</taxon>
        <taxon>Corynebacterium</taxon>
    </lineage>
</organism>
<comment type="function">
    <text evidence="1">Fluoride-specific ion channel. Important for reducing fluoride concentration in the cell, thus reducing its toxicity.</text>
</comment>
<comment type="catalytic activity">
    <reaction evidence="1">
        <text>fluoride(in) = fluoride(out)</text>
        <dbReference type="Rhea" id="RHEA:76159"/>
        <dbReference type="ChEBI" id="CHEBI:17051"/>
    </reaction>
    <physiologicalReaction direction="left-to-right" evidence="1">
        <dbReference type="Rhea" id="RHEA:76160"/>
    </physiologicalReaction>
</comment>
<comment type="activity regulation">
    <text evidence="1">Na(+) is not transported, but it plays an essential structural role and its presence is essential for fluoride channel function.</text>
</comment>
<comment type="subcellular location">
    <subcellularLocation>
        <location evidence="1">Cell membrane</location>
        <topology evidence="1">Multi-pass membrane protein</topology>
    </subcellularLocation>
</comment>
<comment type="similarity">
    <text evidence="1">Belongs to the fluoride channel Fluc/FEX (TC 1.A.43) family.</text>
</comment>
<accession>Q8FMR6</accession>
<evidence type="ECO:0000255" key="1">
    <source>
        <dbReference type="HAMAP-Rule" id="MF_00454"/>
    </source>
</evidence>
<name>FLUC_COREF</name>
<gene>
    <name evidence="1" type="primary">fluC</name>
    <name evidence="1" type="synonym">crcB</name>
    <name type="ordered locus">CE2434</name>
</gene>
<feature type="chain" id="PRO_0000110091" description="Fluoride-specific ion channel FluC">
    <location>
        <begin position="1"/>
        <end position="138"/>
    </location>
</feature>
<feature type="transmembrane region" description="Helical" evidence="1">
    <location>
        <begin position="34"/>
        <end position="54"/>
    </location>
</feature>
<feature type="transmembrane region" description="Helical" evidence="1">
    <location>
        <begin position="60"/>
        <end position="80"/>
    </location>
</feature>
<feature type="transmembrane region" description="Helical" evidence="1">
    <location>
        <begin position="88"/>
        <end position="108"/>
    </location>
</feature>
<feature type="transmembrane region" description="Helical" evidence="1">
    <location>
        <begin position="112"/>
        <end position="132"/>
    </location>
</feature>
<feature type="binding site" evidence="1">
    <location>
        <position position="95"/>
    </location>
    <ligand>
        <name>Na(+)</name>
        <dbReference type="ChEBI" id="CHEBI:29101"/>
        <note>structural</note>
    </ligand>
</feature>
<feature type="binding site" evidence="1">
    <location>
        <position position="98"/>
    </location>
    <ligand>
        <name>Na(+)</name>
        <dbReference type="ChEBI" id="CHEBI:29101"/>
        <note>structural</note>
    </ligand>
</feature>
<protein>
    <recommendedName>
        <fullName evidence="1">Fluoride-specific ion channel FluC</fullName>
    </recommendedName>
</protein>
<dbReference type="EMBL" id="BA000035">
    <property type="protein sequence ID" value="BAC19244.1"/>
    <property type="molecule type" value="Genomic_DNA"/>
</dbReference>
<dbReference type="SMR" id="Q8FMR6"/>
<dbReference type="STRING" id="196164.gene:10742874"/>
<dbReference type="KEGG" id="cef:CE2434"/>
<dbReference type="eggNOG" id="COG0239">
    <property type="taxonomic scope" value="Bacteria"/>
</dbReference>
<dbReference type="HOGENOM" id="CLU_114342_1_3_11"/>
<dbReference type="Proteomes" id="UP000001409">
    <property type="component" value="Chromosome"/>
</dbReference>
<dbReference type="GO" id="GO:0005886">
    <property type="term" value="C:plasma membrane"/>
    <property type="evidence" value="ECO:0007669"/>
    <property type="project" value="UniProtKB-SubCell"/>
</dbReference>
<dbReference type="GO" id="GO:0062054">
    <property type="term" value="F:fluoride channel activity"/>
    <property type="evidence" value="ECO:0007669"/>
    <property type="project" value="UniProtKB-UniRule"/>
</dbReference>
<dbReference type="GO" id="GO:0046872">
    <property type="term" value="F:metal ion binding"/>
    <property type="evidence" value="ECO:0007669"/>
    <property type="project" value="UniProtKB-KW"/>
</dbReference>
<dbReference type="GO" id="GO:0140114">
    <property type="term" value="P:cellular detoxification of fluoride"/>
    <property type="evidence" value="ECO:0007669"/>
    <property type="project" value="UniProtKB-UniRule"/>
</dbReference>
<dbReference type="HAMAP" id="MF_00454">
    <property type="entry name" value="FluC"/>
    <property type="match status" value="1"/>
</dbReference>
<dbReference type="InterPro" id="IPR003691">
    <property type="entry name" value="FluC"/>
</dbReference>
<dbReference type="NCBIfam" id="NF001101">
    <property type="entry name" value="PRK00134.1"/>
    <property type="match status" value="1"/>
</dbReference>
<dbReference type="Pfam" id="PF02537">
    <property type="entry name" value="CRCB"/>
    <property type="match status" value="1"/>
</dbReference>
<reference key="1">
    <citation type="journal article" date="2003" name="Genome Res.">
        <title>Comparative complete genome sequence analysis of the amino acid replacements responsible for the thermostability of Corynebacterium efficiens.</title>
        <authorList>
            <person name="Nishio Y."/>
            <person name="Nakamura Y."/>
            <person name="Kawarabayasi Y."/>
            <person name="Usuda Y."/>
            <person name="Kimura E."/>
            <person name="Sugimoto S."/>
            <person name="Matsui K."/>
            <person name="Yamagishi A."/>
            <person name="Kikuchi H."/>
            <person name="Ikeo K."/>
            <person name="Gojobori T."/>
        </authorList>
    </citation>
    <scope>NUCLEOTIDE SEQUENCE [LARGE SCALE GENOMIC DNA]</scope>
    <source>
        <strain>DSM 44549 / YS-314 / AJ 12310 / JCM 11189 / NBRC 100395</strain>
    </source>
</reference>